<evidence type="ECO:0000255" key="1">
    <source>
        <dbReference type="HAMAP-Rule" id="MF_01637"/>
    </source>
</evidence>
<accession>A4VLM9</accession>
<protein>
    <recommendedName>
        <fullName evidence="1">Fe/S biogenesis protein NfuA</fullName>
    </recommendedName>
</protein>
<reference key="1">
    <citation type="journal article" date="2008" name="Proc. Natl. Acad. Sci. U.S.A.">
        <title>Nitrogen fixation island and rhizosphere competence traits in the genome of root-associated Pseudomonas stutzeri A1501.</title>
        <authorList>
            <person name="Yan Y."/>
            <person name="Yang J."/>
            <person name="Dou Y."/>
            <person name="Chen M."/>
            <person name="Ping S."/>
            <person name="Peng J."/>
            <person name="Lu W."/>
            <person name="Zhang W."/>
            <person name="Yao Z."/>
            <person name="Li H."/>
            <person name="Liu W."/>
            <person name="He S."/>
            <person name="Geng L."/>
            <person name="Zhang X."/>
            <person name="Yang F."/>
            <person name="Yu H."/>
            <person name="Zhan Y."/>
            <person name="Li D."/>
            <person name="Lin Z."/>
            <person name="Wang Y."/>
            <person name="Elmerich C."/>
            <person name="Lin M."/>
            <person name="Jin Q."/>
        </authorList>
    </citation>
    <scope>NUCLEOTIDE SEQUENCE [LARGE SCALE GENOMIC DNA]</scope>
    <source>
        <strain>A1501</strain>
    </source>
</reference>
<gene>
    <name evidence="1" type="primary">nfuA</name>
    <name type="ordered locus">PST_2221</name>
</gene>
<comment type="function">
    <text evidence="1">Involved in iron-sulfur cluster biogenesis. Binds a 4Fe-4S cluster, can transfer this cluster to apoproteins, and thereby intervenes in the maturation of Fe/S proteins. Could also act as a scaffold/chaperone for damaged Fe/S proteins.</text>
</comment>
<comment type="cofactor">
    <cofactor evidence="1">
        <name>[4Fe-4S] cluster</name>
        <dbReference type="ChEBI" id="CHEBI:49883"/>
    </cofactor>
    <text evidence="1">Binds 1 [4Fe-4S] cluster per subunit. The cluster is presumably bound at the interface of two monomers.</text>
</comment>
<comment type="subunit">
    <text evidence="1">Homodimer.</text>
</comment>
<comment type="similarity">
    <text evidence="1">Belongs to the NfuA family.</text>
</comment>
<organism>
    <name type="scientific">Stutzerimonas stutzeri (strain A1501)</name>
    <name type="common">Pseudomonas stutzeri</name>
    <dbReference type="NCBI Taxonomy" id="379731"/>
    <lineage>
        <taxon>Bacteria</taxon>
        <taxon>Pseudomonadati</taxon>
        <taxon>Pseudomonadota</taxon>
        <taxon>Gammaproteobacteria</taxon>
        <taxon>Pseudomonadales</taxon>
        <taxon>Pseudomonadaceae</taxon>
        <taxon>Stutzerimonas</taxon>
    </lineage>
</organism>
<feature type="chain" id="PRO_1000186768" description="Fe/S biogenesis protein NfuA">
    <location>
        <begin position="1"/>
        <end position="194"/>
    </location>
</feature>
<feature type="binding site" evidence="1">
    <location>
        <position position="152"/>
    </location>
    <ligand>
        <name>[4Fe-4S] cluster</name>
        <dbReference type="ChEBI" id="CHEBI:49883"/>
    </ligand>
</feature>
<feature type="binding site" evidence="1">
    <location>
        <position position="155"/>
    </location>
    <ligand>
        <name>[4Fe-4S] cluster</name>
        <dbReference type="ChEBI" id="CHEBI:49883"/>
    </ligand>
</feature>
<proteinExistence type="inferred from homology"/>
<keyword id="KW-0004">4Fe-4S</keyword>
<keyword id="KW-0408">Iron</keyword>
<keyword id="KW-0411">Iron-sulfur</keyword>
<keyword id="KW-0479">Metal-binding</keyword>
<keyword id="KW-1185">Reference proteome</keyword>
<sequence>MSAITITEAAHDYLADLLAKQNTTGIGIRIFITQPGTPYAETCIAYCKPGEEKPDDIALALKSFTAWIDGTSEPFLEDALVDYATDRMGGQLTIKAPNAKVPMVNEDSPMNERINYYLQTEINPGLASHGGQVTLIDVVEEGIAVLQFGGGCQGCGQADVTLKEGIEKTLLARIPELKGVRDVTDHTNRENAYY</sequence>
<dbReference type="EMBL" id="CP000304">
    <property type="protein sequence ID" value="ABP79880.1"/>
    <property type="molecule type" value="Genomic_DNA"/>
</dbReference>
<dbReference type="RefSeq" id="WP_011913347.1">
    <property type="nucleotide sequence ID" value="NC_009434.1"/>
</dbReference>
<dbReference type="SMR" id="A4VLM9"/>
<dbReference type="GeneID" id="66821299"/>
<dbReference type="KEGG" id="psa:PST_2221"/>
<dbReference type="eggNOG" id="COG0316">
    <property type="taxonomic scope" value="Bacteria"/>
</dbReference>
<dbReference type="eggNOG" id="COG0694">
    <property type="taxonomic scope" value="Bacteria"/>
</dbReference>
<dbReference type="HOGENOM" id="CLU_094569_0_0_6"/>
<dbReference type="Proteomes" id="UP000000233">
    <property type="component" value="Chromosome"/>
</dbReference>
<dbReference type="GO" id="GO:0051539">
    <property type="term" value="F:4 iron, 4 sulfur cluster binding"/>
    <property type="evidence" value="ECO:0007669"/>
    <property type="project" value="UniProtKB-UniRule"/>
</dbReference>
<dbReference type="GO" id="GO:0005506">
    <property type="term" value="F:iron ion binding"/>
    <property type="evidence" value="ECO:0007669"/>
    <property type="project" value="InterPro"/>
</dbReference>
<dbReference type="GO" id="GO:0016226">
    <property type="term" value="P:iron-sulfur cluster assembly"/>
    <property type="evidence" value="ECO:0007669"/>
    <property type="project" value="UniProtKB-UniRule"/>
</dbReference>
<dbReference type="GO" id="GO:0051604">
    <property type="term" value="P:protein maturation"/>
    <property type="evidence" value="ECO:0007669"/>
    <property type="project" value="UniProtKB-UniRule"/>
</dbReference>
<dbReference type="Gene3D" id="3.30.300.130">
    <property type="entry name" value="Fe-S cluster assembly (FSCA)"/>
    <property type="match status" value="1"/>
</dbReference>
<dbReference type="Gene3D" id="2.60.300.12">
    <property type="entry name" value="HesB-like domain"/>
    <property type="match status" value="1"/>
</dbReference>
<dbReference type="HAMAP" id="MF_01637">
    <property type="entry name" value="Fe_S_biogen_NfuA"/>
    <property type="match status" value="1"/>
</dbReference>
<dbReference type="InterPro" id="IPR017726">
    <property type="entry name" value="Fe/S_biogenesis_protein_NfuA"/>
</dbReference>
<dbReference type="InterPro" id="IPR000361">
    <property type="entry name" value="FeS_biogenesis"/>
</dbReference>
<dbReference type="InterPro" id="IPR034904">
    <property type="entry name" value="FSCA_dom_sf"/>
</dbReference>
<dbReference type="InterPro" id="IPR035903">
    <property type="entry name" value="HesB-like_dom_sf"/>
</dbReference>
<dbReference type="InterPro" id="IPR001075">
    <property type="entry name" value="NIF_FeS_clus_asmbl_NifU_C"/>
</dbReference>
<dbReference type="NCBIfam" id="TIGR03341">
    <property type="entry name" value="YhgI_GntY"/>
    <property type="match status" value="1"/>
</dbReference>
<dbReference type="PANTHER" id="PTHR11178:SF51">
    <property type="entry name" value="FE_S BIOGENESIS PROTEIN NFUA"/>
    <property type="match status" value="1"/>
</dbReference>
<dbReference type="PANTHER" id="PTHR11178">
    <property type="entry name" value="IRON-SULFUR CLUSTER SCAFFOLD PROTEIN NFU-RELATED"/>
    <property type="match status" value="1"/>
</dbReference>
<dbReference type="Pfam" id="PF01521">
    <property type="entry name" value="Fe-S_biosyn"/>
    <property type="match status" value="1"/>
</dbReference>
<dbReference type="Pfam" id="PF01106">
    <property type="entry name" value="NifU"/>
    <property type="match status" value="1"/>
</dbReference>
<dbReference type="SUPFAM" id="SSF117916">
    <property type="entry name" value="Fe-S cluster assembly (FSCA) domain-like"/>
    <property type="match status" value="1"/>
</dbReference>
<dbReference type="SUPFAM" id="SSF89360">
    <property type="entry name" value="HesB-like domain"/>
    <property type="match status" value="1"/>
</dbReference>
<name>NFUA_STUS1</name>